<reference key="1">
    <citation type="journal article" date="2007" name="Proc. Natl. Acad. Sci. U.S.A.">
        <title>Genome sequencing and comparative analysis of Saccharomyces cerevisiae strain YJM789.</title>
        <authorList>
            <person name="Wei W."/>
            <person name="McCusker J.H."/>
            <person name="Hyman R.W."/>
            <person name="Jones T."/>
            <person name="Ning Y."/>
            <person name="Cao Z."/>
            <person name="Gu Z."/>
            <person name="Bruno D."/>
            <person name="Miranda M."/>
            <person name="Nguyen M."/>
            <person name="Wilhelmy J."/>
            <person name="Komp C."/>
            <person name="Tamse R."/>
            <person name="Wang X."/>
            <person name="Jia P."/>
            <person name="Luedi P."/>
            <person name="Oefner P.J."/>
            <person name="David L."/>
            <person name="Dietrich F.S."/>
            <person name="Li Y."/>
            <person name="Davis R.W."/>
            <person name="Steinmetz L.M."/>
        </authorList>
    </citation>
    <scope>NUCLEOTIDE SEQUENCE [LARGE SCALE GENOMIC DNA]</scope>
    <source>
        <strain>YJM789</strain>
    </source>
</reference>
<evidence type="ECO:0000250" key="1">
    <source>
        <dbReference type="UniProtKB" id="P40476"/>
    </source>
</evidence>
<evidence type="ECO:0000255" key="2"/>
<evidence type="ECO:0000256" key="3">
    <source>
        <dbReference type="SAM" id="MobiDB-lite"/>
    </source>
</evidence>
<evidence type="ECO:0000305" key="4"/>
<name>PRM5_YEAS7</name>
<proteinExistence type="inferred from homology"/>
<protein>
    <recommendedName>
        <fullName>Pheromone-regulated membrane protein 5</fullName>
    </recommendedName>
</protein>
<accession>A6ZVG0</accession>
<gene>
    <name type="primary">PRM5</name>
    <name type="ORF">SCY_2676</name>
</gene>
<sequence>MTVITIAKRGLPKLTTSTSSTTTASSSSTITSVVSSSSSSSSLPLLSNSTSSSIIPSITPPSRNGNPYILDSGDMPNGTVFIIVGGIAGVIFLAILLWWVITTYSSHRLTRSVQDYESKMFSAQHTQFYGDSPYMDYPAKENFQDQVHISESDISPGNKDESVKDALVSHTNNEKPFLSNFERPLSSLVSESNRNSLFISPTGDILNKTRLSKLYQESPRLLQKPVIMTSDNVSTNSLVSTISSSSASSLDNGNEKEVGEDIRKPAKIASSPSRKLLNSPESDGSVNRNHSKGNLLVVQSKRKPTPSTYLEHMLEGKEQDE</sequence>
<comment type="subcellular location">
    <subcellularLocation>
        <location evidence="4">Membrane</location>
        <topology evidence="4">Single-pass membrane protein</topology>
    </subcellularLocation>
</comment>
<comment type="similarity">
    <text evidence="4">Belongs to the PRM5 family.</text>
</comment>
<feature type="chain" id="PRO_0000409312" description="Pheromone-regulated membrane protein 5">
    <location>
        <begin position="1"/>
        <end position="321"/>
    </location>
</feature>
<feature type="transmembrane region" description="Helical" evidence="2">
    <location>
        <begin position="81"/>
        <end position="101"/>
    </location>
</feature>
<feature type="region of interest" description="Disordered" evidence="3">
    <location>
        <begin position="35"/>
        <end position="59"/>
    </location>
</feature>
<feature type="region of interest" description="Disordered" evidence="3">
    <location>
        <begin position="241"/>
        <end position="321"/>
    </location>
</feature>
<feature type="compositionally biased region" description="Low complexity" evidence="3">
    <location>
        <begin position="241"/>
        <end position="250"/>
    </location>
</feature>
<feature type="compositionally biased region" description="Basic and acidic residues" evidence="3">
    <location>
        <begin position="253"/>
        <end position="264"/>
    </location>
</feature>
<feature type="compositionally biased region" description="Polar residues" evidence="3">
    <location>
        <begin position="279"/>
        <end position="288"/>
    </location>
</feature>
<feature type="compositionally biased region" description="Basic and acidic residues" evidence="3">
    <location>
        <begin position="312"/>
        <end position="321"/>
    </location>
</feature>
<feature type="modified residue" description="Phosphoserine" evidence="1">
    <location>
        <position position="132"/>
    </location>
</feature>
<feature type="modified residue" description="Phosphoserine" evidence="1">
    <location>
        <position position="282"/>
    </location>
</feature>
<feature type="modified residue" description="Phosphoserine" evidence="1">
    <location>
        <position position="285"/>
    </location>
</feature>
<feature type="modified residue" description="Phosphoserine" evidence="1">
    <location>
        <position position="291"/>
    </location>
</feature>
<feature type="cross-link" description="Glycyl lysine isopeptide (Lys-Gly) (interchain with G-Cter in ubiquitin)" evidence="1">
    <location>
        <position position="317"/>
    </location>
</feature>
<keyword id="KW-1017">Isopeptide bond</keyword>
<keyword id="KW-0472">Membrane</keyword>
<keyword id="KW-0597">Phosphoprotein</keyword>
<keyword id="KW-0812">Transmembrane</keyword>
<keyword id="KW-1133">Transmembrane helix</keyword>
<keyword id="KW-0832">Ubl conjugation</keyword>
<dbReference type="EMBL" id="AAFW02000124">
    <property type="protein sequence ID" value="EDN61385.1"/>
    <property type="molecule type" value="Genomic_DNA"/>
</dbReference>
<dbReference type="HOGENOM" id="CLU_061224_0_0_1"/>
<dbReference type="OrthoDB" id="39523at4893"/>
<dbReference type="Proteomes" id="UP000007060">
    <property type="component" value="Unassembled WGS sequence"/>
</dbReference>
<dbReference type="GO" id="GO:0005935">
    <property type="term" value="C:cellular bud neck"/>
    <property type="evidence" value="ECO:0007669"/>
    <property type="project" value="TreeGrafter"/>
</dbReference>
<dbReference type="GO" id="GO:0000324">
    <property type="term" value="C:fungal-type vacuole"/>
    <property type="evidence" value="ECO:0007669"/>
    <property type="project" value="TreeGrafter"/>
</dbReference>
<dbReference type="GO" id="GO:0016020">
    <property type="term" value="C:membrane"/>
    <property type="evidence" value="ECO:0007669"/>
    <property type="project" value="UniProtKB-SubCell"/>
</dbReference>
<dbReference type="InterPro" id="IPR051009">
    <property type="entry name" value="PRM"/>
</dbReference>
<dbReference type="PANTHER" id="PTHR36089">
    <property type="entry name" value="CHITIN SYNTHASE 3 COMPLEX PROTEIN CSI2-RELATED"/>
    <property type="match status" value="1"/>
</dbReference>
<dbReference type="PANTHER" id="PTHR36089:SF1">
    <property type="entry name" value="CHITIN SYNTHASE 3 COMPLEX PROTEIN CSI2-RELATED"/>
    <property type="match status" value="1"/>
</dbReference>
<organism>
    <name type="scientific">Saccharomyces cerevisiae (strain YJM789)</name>
    <name type="common">Baker's yeast</name>
    <dbReference type="NCBI Taxonomy" id="307796"/>
    <lineage>
        <taxon>Eukaryota</taxon>
        <taxon>Fungi</taxon>
        <taxon>Dikarya</taxon>
        <taxon>Ascomycota</taxon>
        <taxon>Saccharomycotina</taxon>
        <taxon>Saccharomycetes</taxon>
        <taxon>Saccharomycetales</taxon>
        <taxon>Saccharomycetaceae</taxon>
        <taxon>Saccharomyces</taxon>
    </lineage>
</organism>